<protein>
    <recommendedName>
        <fullName evidence="6">FIP1[III]-like protein</fullName>
        <shortName evidence="6">AtFIP1(III)</shortName>
    </recommendedName>
    <alternativeName>
        <fullName evidence="7">Factor interacting with poly(A) polymerase-like 3</fullName>
        <shortName evidence="6">AtFIPS3</shortName>
    </alternativeName>
    <alternativeName>
        <fullName evidence="7">Protein HOMOLOG OF YEAST FIP1 [III]</fullName>
    </alternativeName>
</protein>
<sequence length="997" mass="115371">MDSTDDDFGDLYVDDAKFQATDAFESECATNSGEDKGFEETVKSDSEGEVKKFDVVAKDSSPCDDDDCAMNLTEADEESEFSDSDDDLNIVLKDDDSKALPASCVFNTNFGGYEASKASSFQRRWTRNASANNACIDPSLGMSQYRYSFPNPWSRTPFDVNLDVLEKKPWRDPGTDTSDFFNFGLNEQSWKDYCKPLGRAIEVRGGTLERIPSADLRRPRDPDPGVVIQIPVTNDVEELPVRTPEKARCITSNEASRSDVSHSYGSKDLNSVYGSPKDEAFVGCQEENAGSFSGEKSLPTENCCSREATPSDKEMLEKEKEESVCNSDETDPSSVERESSLGDRIRLSPTSSSSVGINEESDDYETESLKDSATDDQREVSTPPQEARLAEHEAISIKRGEDSGTMHSRHRRSHEDSSKRHCGRAGYARYVKDASPTPDPGRGKKVGSLQGLYRDSNKNWQNGPPITLERDETEGKGVHYYREKSHGRLNSSVDHDRHREHRFGWRNNKESSLGRGFDHSNSYKCGTHLKEYTSRSSFDLNQRNSRSSFKEEDDRYGWHHRERKYVHERSPIRAYENYKERNGCDWLREPYYEDCIPITDMDYRYRSENSSAHAIHNLKHSPENDLYCRRRGGYDYNLHRDRYEDGVHRVESRIPFELAYREMRSFAEVEMREYQGYKRHEEFSEIEKRHHYIHDWHLDRFVSEEDGYKYRIQDGWSSPSLSLRDSWYTKEAKGDFRRDDTRDFRTPEAYDSQNNHFHKAAPRDGWTQNLGRSHNVSVKDRLQYDADWVGPDRGRYNMADDMQCSMREVSNSEHPSYTDEIFVRDIRVPTHNRMATKQRFGYLQSHIHENDERHHRSKKLRGDGHAFIKRQDHVDLAGRQGKVSNQSKKRFSNGGDTIEQQDVQKPRKLMGKSEEKAMQNRDINDKEEGEIIEEVKGVEIDNERIQESLKKMEKRRERFKGTKLAVEATFKSQTELRAKADVTNQQRPVRKRRWCAS</sequence>
<reference key="1">
    <citation type="journal article" date="2000" name="Nature">
        <title>Sequence and analysis of chromosome 3 of the plant Arabidopsis thaliana.</title>
        <authorList>
            <person name="Salanoubat M."/>
            <person name="Lemcke K."/>
            <person name="Rieger M."/>
            <person name="Ansorge W."/>
            <person name="Unseld M."/>
            <person name="Fartmann B."/>
            <person name="Valle G."/>
            <person name="Bloecker H."/>
            <person name="Perez-Alonso M."/>
            <person name="Obermaier B."/>
            <person name="Delseny M."/>
            <person name="Boutry M."/>
            <person name="Grivell L.A."/>
            <person name="Mache R."/>
            <person name="Puigdomenech P."/>
            <person name="De Simone V."/>
            <person name="Choisne N."/>
            <person name="Artiguenave F."/>
            <person name="Robert C."/>
            <person name="Brottier P."/>
            <person name="Wincker P."/>
            <person name="Cattolico L."/>
            <person name="Weissenbach J."/>
            <person name="Saurin W."/>
            <person name="Quetier F."/>
            <person name="Schaefer M."/>
            <person name="Mueller-Auer S."/>
            <person name="Gabel C."/>
            <person name="Fuchs M."/>
            <person name="Benes V."/>
            <person name="Wurmbach E."/>
            <person name="Drzonek H."/>
            <person name="Erfle H."/>
            <person name="Jordan N."/>
            <person name="Bangert S."/>
            <person name="Wiedelmann R."/>
            <person name="Kranz H."/>
            <person name="Voss H."/>
            <person name="Holland R."/>
            <person name="Brandt P."/>
            <person name="Nyakatura G."/>
            <person name="Vezzi A."/>
            <person name="D'Angelo M."/>
            <person name="Pallavicini A."/>
            <person name="Toppo S."/>
            <person name="Simionati B."/>
            <person name="Conrad A."/>
            <person name="Hornischer K."/>
            <person name="Kauer G."/>
            <person name="Loehnert T.-H."/>
            <person name="Nordsiek G."/>
            <person name="Reichelt J."/>
            <person name="Scharfe M."/>
            <person name="Schoen O."/>
            <person name="Bargues M."/>
            <person name="Terol J."/>
            <person name="Climent J."/>
            <person name="Navarro P."/>
            <person name="Collado C."/>
            <person name="Perez-Perez A."/>
            <person name="Ottenwaelder B."/>
            <person name="Duchemin D."/>
            <person name="Cooke R."/>
            <person name="Laudie M."/>
            <person name="Berger-Llauro C."/>
            <person name="Purnelle B."/>
            <person name="Masuy D."/>
            <person name="de Haan M."/>
            <person name="Maarse A.C."/>
            <person name="Alcaraz J.-P."/>
            <person name="Cottet A."/>
            <person name="Casacuberta E."/>
            <person name="Monfort A."/>
            <person name="Argiriou A."/>
            <person name="Flores M."/>
            <person name="Liguori R."/>
            <person name="Vitale D."/>
            <person name="Mannhaupt G."/>
            <person name="Haase D."/>
            <person name="Schoof H."/>
            <person name="Rudd S."/>
            <person name="Zaccaria P."/>
            <person name="Mewes H.-W."/>
            <person name="Mayer K.F.X."/>
            <person name="Kaul S."/>
            <person name="Town C.D."/>
            <person name="Koo H.L."/>
            <person name="Tallon L.J."/>
            <person name="Jenkins J."/>
            <person name="Rooney T."/>
            <person name="Rizzo M."/>
            <person name="Walts A."/>
            <person name="Utterback T."/>
            <person name="Fujii C.Y."/>
            <person name="Shea T.P."/>
            <person name="Creasy T.H."/>
            <person name="Haas B."/>
            <person name="Maiti R."/>
            <person name="Wu D."/>
            <person name="Peterson J."/>
            <person name="Van Aken S."/>
            <person name="Pai G."/>
            <person name="Militscher J."/>
            <person name="Sellers P."/>
            <person name="Gill J.E."/>
            <person name="Feldblyum T.V."/>
            <person name="Preuss D."/>
            <person name="Lin X."/>
            <person name="Nierman W.C."/>
            <person name="Salzberg S.L."/>
            <person name="White O."/>
            <person name="Venter J.C."/>
            <person name="Fraser C.M."/>
            <person name="Kaneko T."/>
            <person name="Nakamura Y."/>
            <person name="Sato S."/>
            <person name="Kato T."/>
            <person name="Asamizu E."/>
            <person name="Sasamoto S."/>
            <person name="Kimura T."/>
            <person name="Idesawa K."/>
            <person name="Kawashima K."/>
            <person name="Kishida Y."/>
            <person name="Kiyokawa C."/>
            <person name="Kohara M."/>
            <person name="Matsumoto M."/>
            <person name="Matsuno A."/>
            <person name="Muraki A."/>
            <person name="Nakayama S."/>
            <person name="Nakazaki N."/>
            <person name="Shinpo S."/>
            <person name="Takeuchi C."/>
            <person name="Wada T."/>
            <person name="Watanabe A."/>
            <person name="Yamada M."/>
            <person name="Yasuda M."/>
            <person name="Tabata S."/>
        </authorList>
    </citation>
    <scope>NUCLEOTIDE SEQUENCE [LARGE SCALE GENOMIC DNA]</scope>
    <source>
        <strain>cv. Columbia</strain>
    </source>
</reference>
<reference key="2">
    <citation type="journal article" date="2017" name="Plant J.">
        <title>Araport11: a complete reannotation of the Arabidopsis thaliana reference genome.</title>
        <authorList>
            <person name="Cheng C.Y."/>
            <person name="Krishnakumar V."/>
            <person name="Chan A.P."/>
            <person name="Thibaud-Nissen F."/>
            <person name="Schobel S."/>
            <person name="Town C.D."/>
        </authorList>
    </citation>
    <scope>GENOME REANNOTATION</scope>
    <source>
        <strain>cv. Columbia</strain>
    </source>
</reference>
<reference key="3">
    <citation type="journal article" date="2006" name="J. Biol. Chem.">
        <title>An Arabidopsis Fip1 homolog interacts with RNA and provides conceptual links with a number of other polyadenylation factor subunits.</title>
        <authorList>
            <person name="Forbes K.P."/>
            <person name="Addepalli B."/>
            <person name="Hunt A.G."/>
        </authorList>
    </citation>
    <scope>GENE FAMILY</scope>
</reference>
<reference key="4">
    <citation type="journal article" date="2008" name="BMC Genomics">
        <title>Arabidopsis mRNA polyadenylation machinery: comprehensive analysis of protein-protein interactions and gene expression profiling.</title>
        <authorList>
            <person name="Hunt A.G."/>
            <person name="Xu R."/>
            <person name="Addepalli B."/>
            <person name="Rao S."/>
            <person name="Forbes K.P."/>
            <person name="Meeks L.R."/>
            <person name="Xing D."/>
            <person name="Mo M."/>
            <person name="Zhao H."/>
            <person name="Bandyopadhyay A."/>
            <person name="Dampanaboina L."/>
            <person name="Marion A."/>
            <person name="Von Lanken C."/>
            <person name="Li Q.Q."/>
        </authorList>
    </citation>
    <scope>INTERACTION WITH CLPS5; CSTF64; CPSF30; FIPS5; PCFS1 AND PAPS4</scope>
    <scope>GENE FAMILY</scope>
    <scope>NOMENCLATURE</scope>
</reference>
<accession>F4JC20</accession>
<accession>Q9C834</accession>
<accession>Q9C904</accession>
<gene>
    <name evidence="6" type="primary">FIPS3</name>
    <name evidence="8" type="ordered locus">At3g66652</name>
    <name evidence="10" type="ORF">F5E6.1</name>
    <name evidence="9" type="ORF">T8E24.6</name>
</gene>
<keyword id="KW-0175">Coiled coil</keyword>
<keyword id="KW-0507">mRNA processing</keyword>
<keyword id="KW-0539">Nucleus</keyword>
<keyword id="KW-1185">Reference proteome</keyword>
<keyword id="KW-0694">RNA-binding</keyword>
<name>FIPS3_ARATH</name>
<feature type="chain" id="PRO_0000431326" description="FIP1[III]-like protein">
    <location>
        <begin position="1"/>
        <end position="997"/>
    </location>
</feature>
<feature type="region of interest" description="Disordered" evidence="4">
    <location>
        <begin position="250"/>
        <end position="272"/>
    </location>
</feature>
<feature type="region of interest" description="Disordered" evidence="4">
    <location>
        <begin position="289"/>
        <end position="475"/>
    </location>
</feature>
<feature type="region of interest" description="Disordered" evidence="4">
    <location>
        <begin position="534"/>
        <end position="553"/>
    </location>
</feature>
<feature type="region of interest" description="Disordered" evidence="4">
    <location>
        <begin position="880"/>
        <end position="900"/>
    </location>
</feature>
<feature type="coiled-coil region" evidence="2">
    <location>
        <begin position="930"/>
        <end position="963"/>
    </location>
</feature>
<feature type="short sequence motif" description="Nuclear localization signal" evidence="3">
    <location>
        <begin position="397"/>
        <end position="404"/>
    </location>
</feature>
<feature type="compositionally biased region" description="Polar residues" evidence="4">
    <location>
        <begin position="261"/>
        <end position="272"/>
    </location>
</feature>
<feature type="compositionally biased region" description="Basic and acidic residues" evidence="4">
    <location>
        <begin position="309"/>
        <end position="323"/>
    </location>
</feature>
<feature type="compositionally biased region" description="Basic and acidic residues" evidence="4">
    <location>
        <begin position="334"/>
        <end position="346"/>
    </location>
</feature>
<feature type="compositionally biased region" description="Basic and acidic residues" evidence="4">
    <location>
        <begin position="367"/>
        <end position="379"/>
    </location>
</feature>
<feature type="compositionally biased region" description="Basic and acidic residues" evidence="4">
    <location>
        <begin position="388"/>
        <end position="404"/>
    </location>
</feature>
<feature type="compositionally biased region" description="Polar residues" evidence="4">
    <location>
        <begin position="534"/>
        <end position="547"/>
    </location>
</feature>
<evidence type="ECO:0000250" key="1">
    <source>
        <dbReference type="UniProtKB" id="Q6UN15"/>
    </source>
</evidence>
<evidence type="ECO:0000255" key="2"/>
<evidence type="ECO:0000255" key="3">
    <source>
        <dbReference type="PROSITE-ProRule" id="PRU00768"/>
    </source>
</evidence>
<evidence type="ECO:0000256" key="4">
    <source>
        <dbReference type="SAM" id="MobiDB-lite"/>
    </source>
</evidence>
<evidence type="ECO:0000269" key="5">
    <source>
    </source>
</evidence>
<evidence type="ECO:0000303" key="6">
    <source>
    </source>
</evidence>
<evidence type="ECO:0000305" key="7"/>
<evidence type="ECO:0000312" key="8">
    <source>
        <dbReference type="Araport" id="AT3G66652"/>
    </source>
</evidence>
<evidence type="ECO:0000312" key="9">
    <source>
        <dbReference type="EMBL" id="AAG50995.1"/>
    </source>
</evidence>
<evidence type="ECO:0000312" key="10">
    <source>
        <dbReference type="EMBL" id="AAG51321.1"/>
    </source>
</evidence>
<evidence type="ECO:0000312" key="11">
    <source>
        <dbReference type="Proteomes" id="UP000006548"/>
    </source>
</evidence>
<proteinExistence type="evidence at protein level"/>
<organism evidence="11">
    <name type="scientific">Arabidopsis thaliana</name>
    <name type="common">Mouse-ear cress</name>
    <dbReference type="NCBI Taxonomy" id="3702"/>
    <lineage>
        <taxon>Eukaryota</taxon>
        <taxon>Viridiplantae</taxon>
        <taxon>Streptophyta</taxon>
        <taxon>Embryophyta</taxon>
        <taxon>Tracheophyta</taxon>
        <taxon>Spermatophyta</taxon>
        <taxon>Magnoliopsida</taxon>
        <taxon>eudicotyledons</taxon>
        <taxon>Gunneridae</taxon>
        <taxon>Pentapetalae</taxon>
        <taxon>rosids</taxon>
        <taxon>malvids</taxon>
        <taxon>Brassicales</taxon>
        <taxon>Brassicaceae</taxon>
        <taxon>Camelineae</taxon>
        <taxon>Arabidopsis</taxon>
    </lineage>
</organism>
<dbReference type="EMBL" id="AC020580">
    <property type="protein sequence ID" value="AAG51321.1"/>
    <property type="status" value="ALT_SEQ"/>
    <property type="molecule type" value="Genomic_DNA"/>
</dbReference>
<dbReference type="EMBL" id="AC036106">
    <property type="protein sequence ID" value="AAG50995.1"/>
    <property type="status" value="ALT_SEQ"/>
    <property type="molecule type" value="Genomic_DNA"/>
</dbReference>
<dbReference type="EMBL" id="CP002686">
    <property type="protein sequence ID" value="AEE74427.1"/>
    <property type="molecule type" value="Genomic_DNA"/>
</dbReference>
<dbReference type="EMBL" id="CP002686">
    <property type="protein sequence ID" value="AEE74428.1"/>
    <property type="molecule type" value="Genomic_DNA"/>
</dbReference>
<dbReference type="EMBL" id="CP002686">
    <property type="protein sequence ID" value="ANM64486.1"/>
    <property type="molecule type" value="Genomic_DNA"/>
</dbReference>
<dbReference type="RefSeq" id="NP_001189830.1">
    <property type="nucleotide sequence ID" value="NM_001202901.2"/>
</dbReference>
<dbReference type="RefSeq" id="NP_001326511.1">
    <property type="nucleotide sequence ID" value="NM_001340220.1"/>
</dbReference>
<dbReference type="RefSeq" id="NP_187318.2">
    <property type="nucleotide sequence ID" value="NM_111542.2"/>
</dbReference>
<dbReference type="SMR" id="F4JC20"/>
<dbReference type="BioGRID" id="5181">
    <property type="interactions" value="6"/>
</dbReference>
<dbReference type="FunCoup" id="F4JC20">
    <property type="interactions" value="323"/>
</dbReference>
<dbReference type="IntAct" id="F4JC20">
    <property type="interactions" value="6"/>
</dbReference>
<dbReference type="STRING" id="3702.F4JC20"/>
<dbReference type="GlyGen" id="F4JC20">
    <property type="glycosylation" value="2 sites"/>
</dbReference>
<dbReference type="iPTMnet" id="F4JC20"/>
<dbReference type="PaxDb" id="3702-AT3G66652.2"/>
<dbReference type="ProteomicsDB" id="230579"/>
<dbReference type="EnsemblPlants" id="AT3G66652.1">
    <property type="protein sequence ID" value="AT3G66652.1"/>
    <property type="gene ID" value="AT3G66652"/>
</dbReference>
<dbReference type="EnsemblPlants" id="AT3G66652.2">
    <property type="protein sequence ID" value="AT3G66652.2"/>
    <property type="gene ID" value="AT3G66652"/>
</dbReference>
<dbReference type="EnsemblPlants" id="AT3G66652.3">
    <property type="protein sequence ID" value="AT3G66652.3"/>
    <property type="gene ID" value="AT3G66652"/>
</dbReference>
<dbReference type="GeneID" id="819846"/>
<dbReference type="Gramene" id="AT3G66652.1">
    <property type="protein sequence ID" value="AT3G66652.1"/>
    <property type="gene ID" value="AT3G66652"/>
</dbReference>
<dbReference type="Gramene" id="AT3G66652.2">
    <property type="protein sequence ID" value="AT3G66652.2"/>
    <property type="gene ID" value="AT3G66652"/>
</dbReference>
<dbReference type="Gramene" id="AT3G66652.3">
    <property type="protein sequence ID" value="AT3G66652.3"/>
    <property type="gene ID" value="AT3G66652"/>
</dbReference>
<dbReference type="KEGG" id="ath:AT3G66652"/>
<dbReference type="Araport" id="AT3G66652"/>
<dbReference type="TAIR" id="AT3G66652"/>
<dbReference type="eggNOG" id="KOG1049">
    <property type="taxonomic scope" value="Eukaryota"/>
</dbReference>
<dbReference type="HOGENOM" id="CLU_006791_0_0_1"/>
<dbReference type="InParanoid" id="F4JC20"/>
<dbReference type="OMA" id="GWRNNKE"/>
<dbReference type="PRO" id="PR:F4JC20"/>
<dbReference type="Proteomes" id="UP000006548">
    <property type="component" value="Chromosome 3"/>
</dbReference>
<dbReference type="ExpressionAtlas" id="F4JC20">
    <property type="expression patterns" value="baseline and differential"/>
</dbReference>
<dbReference type="GO" id="GO:0005634">
    <property type="term" value="C:nucleus"/>
    <property type="evidence" value="ECO:0007669"/>
    <property type="project" value="UniProtKB-SubCell"/>
</dbReference>
<dbReference type="GO" id="GO:0003723">
    <property type="term" value="F:RNA binding"/>
    <property type="evidence" value="ECO:0007669"/>
    <property type="project" value="UniProtKB-KW"/>
</dbReference>
<dbReference type="GO" id="GO:0006397">
    <property type="term" value="P:mRNA processing"/>
    <property type="evidence" value="ECO:0007669"/>
    <property type="project" value="UniProtKB-KW"/>
</dbReference>
<dbReference type="InterPro" id="IPR007854">
    <property type="entry name" value="Fip1_dom"/>
</dbReference>
<dbReference type="InterPro" id="IPR044976">
    <property type="entry name" value="FIPS5/FIPS3-like"/>
</dbReference>
<dbReference type="PANTHER" id="PTHR36884">
    <property type="entry name" value="FIP1[III]-LIKE PROTEIN"/>
    <property type="match status" value="1"/>
</dbReference>
<dbReference type="PANTHER" id="PTHR36884:SF4">
    <property type="entry name" value="FIP1[III]-LIKE PROTEIN"/>
    <property type="match status" value="1"/>
</dbReference>
<dbReference type="Pfam" id="PF05182">
    <property type="entry name" value="Fip1"/>
    <property type="match status" value="1"/>
</dbReference>
<comment type="function">
    <text evidence="1">Component of the cleavage and polyadenylation specificity factor (CPSF) complex that plays a key role in pre-mRNA 3'-end formation, recognizing the AAUAAA signal sequence and interacting with poly(A) polymerase and other factors to bring about cleavage and poly(A) addition. FIP1L1 contributes to poly(A) site recognition and stimulates poly(A) addition. Binds to U-rich RNA sequence elements surrounding the poly(A) site. May act to tether poly(A) polymerase to the CPSF complex.</text>
</comment>
<comment type="subunit">
    <text evidence="1 5">Component of the cleavage and polyadenylation specificity factor (CPSF) complex (By similarity). Forms a complex with cleavage and polyadenylation specificity factor (CPSF) subunits CLPS5, FIPS5, PAPS4, PCFS1, CSTF64 and CPSF30 (PubMed:18479511).</text>
</comment>
<comment type="subcellular location">
    <subcellularLocation>
        <location evidence="1 3">Nucleus</location>
    </subcellularLocation>
</comment>
<comment type="similarity">
    <text evidence="7">Belongs to the FIP1 family.</text>
</comment>
<comment type="sequence caution" evidence="7">
    <conflict type="erroneous gene model prediction">
        <sequence resource="EMBL-CDS" id="AAG50995"/>
    </conflict>
</comment>
<comment type="sequence caution" evidence="7">
    <conflict type="erroneous gene model prediction">
        <sequence resource="EMBL-CDS" id="AAG51321"/>
    </conflict>
</comment>